<evidence type="ECO:0000255" key="1">
    <source>
        <dbReference type="HAMAP-Rule" id="MF_00457"/>
    </source>
</evidence>
<sequence>MKITWLGHSAFRIETSKSKILLDPFLSHNASFSGQDIKDVSAGITHILLTHGHGDHVGDTVALAKETGAVVLANADLAAWLGSKGVDRIEMGNTGGTVTFGGFSATFTNALHSSAQITEDGVSHALGNANGLMLHFDDEASIFAMGDTDIFSDMALINELHQPDIGFVPIGDRFTMGGAVAALACQRYFSFKTAIPCHYGTFPIIDQTADKFVAGMEGSKTQARAMKPAESLSI</sequence>
<proteinExistence type="inferred from homology"/>
<feature type="chain" id="PRO_0000367202" description="UPF0173 metal-dependent hydrolase RHE_CH01853">
    <location>
        <begin position="1"/>
        <end position="234"/>
    </location>
</feature>
<protein>
    <recommendedName>
        <fullName evidence="1">UPF0173 metal-dependent hydrolase RHE_CH01853</fullName>
    </recommendedName>
</protein>
<accession>Q2K941</accession>
<gene>
    <name type="ordered locus">RHE_CH01853</name>
</gene>
<comment type="similarity">
    <text evidence="1">Belongs to the UPF0173 family.</text>
</comment>
<reference key="1">
    <citation type="journal article" date="2006" name="Proc. Natl. Acad. Sci. U.S.A.">
        <title>The partitioned Rhizobium etli genome: genetic and metabolic redundancy in seven interacting replicons.</title>
        <authorList>
            <person name="Gonzalez V."/>
            <person name="Santamaria R.I."/>
            <person name="Bustos P."/>
            <person name="Hernandez-Gonzalez I."/>
            <person name="Medrano-Soto A."/>
            <person name="Moreno-Hagelsieb G."/>
            <person name="Janga S.C."/>
            <person name="Ramirez M.A."/>
            <person name="Jimenez-Jacinto V."/>
            <person name="Collado-Vides J."/>
            <person name="Davila G."/>
        </authorList>
    </citation>
    <scope>NUCLEOTIDE SEQUENCE [LARGE SCALE GENOMIC DNA]</scope>
    <source>
        <strain>ATCC 51251 / DSM 11541 / JCM 21823 / NBRC 15573 / CFN 42</strain>
    </source>
</reference>
<dbReference type="EMBL" id="CP000133">
    <property type="protein sequence ID" value="ABC90645.1"/>
    <property type="molecule type" value="Genomic_DNA"/>
</dbReference>
<dbReference type="RefSeq" id="WP_011425141.1">
    <property type="nucleotide sequence ID" value="NC_007761.1"/>
</dbReference>
<dbReference type="SMR" id="Q2K941"/>
<dbReference type="KEGG" id="ret:RHE_CH01853"/>
<dbReference type="eggNOG" id="COG2220">
    <property type="taxonomic scope" value="Bacteria"/>
</dbReference>
<dbReference type="HOGENOM" id="CLU_070010_4_0_5"/>
<dbReference type="OrthoDB" id="9789133at2"/>
<dbReference type="Proteomes" id="UP000001936">
    <property type="component" value="Chromosome"/>
</dbReference>
<dbReference type="GO" id="GO:0016787">
    <property type="term" value="F:hydrolase activity"/>
    <property type="evidence" value="ECO:0007669"/>
    <property type="project" value="UniProtKB-UniRule"/>
</dbReference>
<dbReference type="CDD" id="cd06262">
    <property type="entry name" value="metallo-hydrolase-like_MBL-fold"/>
    <property type="match status" value="1"/>
</dbReference>
<dbReference type="Gene3D" id="3.60.15.10">
    <property type="entry name" value="Ribonuclease Z/Hydroxyacylglutathione hydrolase-like"/>
    <property type="match status" value="1"/>
</dbReference>
<dbReference type="HAMAP" id="MF_00457">
    <property type="entry name" value="UPF0173"/>
    <property type="match status" value="1"/>
</dbReference>
<dbReference type="InterPro" id="IPR001279">
    <property type="entry name" value="Metallo-B-lactamas"/>
</dbReference>
<dbReference type="InterPro" id="IPR036866">
    <property type="entry name" value="RibonucZ/Hydroxyglut_hydro"/>
</dbReference>
<dbReference type="InterPro" id="IPR022877">
    <property type="entry name" value="UPF0173"/>
</dbReference>
<dbReference type="InterPro" id="IPR050114">
    <property type="entry name" value="UPF0173_UPF0282_UlaG_hydrolase"/>
</dbReference>
<dbReference type="NCBIfam" id="NF001911">
    <property type="entry name" value="PRK00685.1"/>
    <property type="match status" value="1"/>
</dbReference>
<dbReference type="PANTHER" id="PTHR43546:SF3">
    <property type="entry name" value="UPF0173 METAL-DEPENDENT HYDROLASE MJ1163"/>
    <property type="match status" value="1"/>
</dbReference>
<dbReference type="PANTHER" id="PTHR43546">
    <property type="entry name" value="UPF0173 METAL-DEPENDENT HYDROLASE MJ1163-RELATED"/>
    <property type="match status" value="1"/>
</dbReference>
<dbReference type="Pfam" id="PF12706">
    <property type="entry name" value="Lactamase_B_2"/>
    <property type="match status" value="1"/>
</dbReference>
<dbReference type="SMART" id="SM00849">
    <property type="entry name" value="Lactamase_B"/>
    <property type="match status" value="1"/>
</dbReference>
<dbReference type="SUPFAM" id="SSF56281">
    <property type="entry name" value="Metallo-hydrolase/oxidoreductase"/>
    <property type="match status" value="1"/>
</dbReference>
<keyword id="KW-0378">Hydrolase</keyword>
<keyword id="KW-1185">Reference proteome</keyword>
<name>Y1853_RHIEC</name>
<organism>
    <name type="scientific">Rhizobium etli (strain ATCC 51251 / DSM 11541 / JCM 21823 / NBRC 15573 / CFN 42)</name>
    <dbReference type="NCBI Taxonomy" id="347834"/>
    <lineage>
        <taxon>Bacteria</taxon>
        <taxon>Pseudomonadati</taxon>
        <taxon>Pseudomonadota</taxon>
        <taxon>Alphaproteobacteria</taxon>
        <taxon>Hyphomicrobiales</taxon>
        <taxon>Rhizobiaceae</taxon>
        <taxon>Rhizobium/Agrobacterium group</taxon>
        <taxon>Rhizobium</taxon>
    </lineage>
</organism>